<sequence length="2280" mass="256843">MRQSVTSSSSCSKLYAIKATISLPRLFYRRLRTMAPRVASHFLGGNSLDKAPAGKVKDYIASHGGHTVITSILIANNGIAAVKEIRSIRKWAYETFNNERAIKFTVMATPDDLKVNADYIRMADQYVEVPGGSNNNNYANVELIVDIAERMNVHAVWAGWGHASENPKLPEMLSASSKKIVFIGPPGSAMRSLGDKISSTIVAQSARVPCMSWSGNELDQVRIDEETNIVTVDDDVYQKACIRSAEEGIAVAEKIGYPVMIKASEGGGGKGIRQVTSTEKFAQAFQQVLDELPGSPVFVMKLAGQARHLEVQILADQYGNNISLFGRDCSVQRRHQKIIEEAPVTIAPAATFHEMERAAVRLGELVGYASAGTIEYLYEPENDRFYFLELNPRLQVEHPTTEMVSGVNLPAAQLQVAMGLPLSRIPHIRELYGLPRDGDSEIDFFFQNPESFKVQKVPTPKGHCVACRITSEDPGEGFKPSSGMIKDLNFRSSSNVWGYFSVGTAGGIHEFADSQFGHIFSFAESRESSRKSMVVALKELSIRGDFRTTVEYLVRLLETKEFSENEFTTGWLDRLIAQKVTSARPDKMLAVVCGALVRAHATADTQYRAFKSYLERGQVPSREFLKNVYDIEFIYDNTRYRFTASRSSPGSYHLFLNGSRCTAGVRSLTDGGLLVLLNGHSYTVYYRDEVTGTRISIDNLSCMLEQENDPTQLRTPSPGKLVRFLVETGEHIKAGEAYAEVEVMKMIMPLVATEDGVVQLIKQPGASLDAGDILGILTLDDPSRVTHALPFDGQLPNWGEPQIAGNKPCQRYHALLCILLDILKGYDNQIILNSTYNEFVEVLRNHELPYSEWSAHYSALVNRISPVLDKLFVSIIEKARSRKAEFPAKQLEVAIQTYCDGQNLATTQQLKVQIAPLLKIISDYKDGLKVHEYNVIKGLLEEYYNVEKLFSGINKREEDVILRLRDENKDDVDKVIALALSHSRIGSKNNLLITILDLMKSEPSTFVSLYFNDILRKLTDLDSRVTSKVSLKARELLITCAMPSLNERFSQMEHILKSSVVESHYGDAKFSHRTPSLDILKELIDSKYTVFDVLPAFFCHTDPWVSLAALEVYVRRAYRAYSVLEINYHTEAGTPYVLTWRFQLHSSGAPGLGANSTNGSNFPASTTPSYENSNRRLQSVSDLSWYVNKTDSEPFRFGTMIAAETFDELENNLALAIDRLPLSRNYFNAGLTLDGNSSSANDNTQELTNVVNVALTSTGDLDDSAIVSKLNQILSDFRDDLLEHNVRRVTIVGGRINKSAYPSYYTYRVSAEQKDGNLVHYNEDERIRHIEPALAFQLELGRLSNFNIEPVFTDNHNIHVYRATAKNMDTDKRFFTRALVRPGRLRDEIPTAEYLISETHRLINDILDALEVIGHEQTDLNHIFINFTPAFGLAPKQVEAALGGFLERFGRRLWRLRVTAAEIRIICTDPSTNTLFPLRVIISNVSGFVVNVEIYAEVKTENNSWIFKSIGQPGSMHLRPISTPYPTKEWLQPRRYKAQLMGTTFVYDFPELFRRAFTDSWKKVPNGRSKVTIPQNMFECKELVADEHGVLQEVNREPGTNSCGMVAWCITVKTPEYPNGRKIIVVANDITFQIGSFGPQEDEYFYKVTQLARQRGIPRIYLAANSGARIGVADEIVPLFNIAWVDPDSPEKGFDYIYLTPEAYERLQKENPNILTTEEVVTETGELRHKITTIIGSSEGLGVECLRGSGLIAGVTSRAYNDIFTCTLVTCRAVGIGAYLVRLGQRAVQIEGQPIILTGAPALNKVLGREVYTSNLQLGGTQVMHRNGISHLTSQDDFDGISKIVNWISYIPDKRNNPVPISPSSDTWDRDVEFYPSQNGYDPRWLIAGKEDEDSFLYGLFDKGSFQETLNGWAKTVVVGRARMGGIPTGVIAVETRTIENTVPADPANPDSTEQVLMEAGQVWYPNSAFKTAQAINDFNHGEQLPLFILANWRGFSGGQRDMFNEVLKYGSYIVDALASYKQPVFVYIPPFSELRGGSWVVVDPTINEDQMEMYADEESRAGVLEPEGMVSIKFRREKLLSLMRRCDHKYASLCNELKRDDLSADDLSTIKVKLMEREQKLMPIYQQISIHFADLHDRVGRMVAKKVVRKPLKWTEARRFFYWRLRRRLNEHYALQKITQLIPSLTIRESREYLQKWYEEWCGKQDWDESDKSVVCWIEEHNDDLSKRTQELKSTYYSERLSKLLRSDRKGMIDSLAQVLTELDENEKKELAGKLASVN</sequence>
<evidence type="ECO:0000250" key="1"/>
<evidence type="ECO:0000250" key="2">
    <source>
        <dbReference type="UniProtKB" id="O00763"/>
    </source>
</evidence>
<evidence type="ECO:0000250" key="3">
    <source>
        <dbReference type="UniProtKB" id="Q00955"/>
    </source>
</evidence>
<evidence type="ECO:0000250" key="4">
    <source>
        <dbReference type="UniProtKB" id="Q5SWU9"/>
    </source>
</evidence>
<evidence type="ECO:0000255" key="5">
    <source>
        <dbReference type="PROSITE-ProRule" id="PRU00409"/>
    </source>
</evidence>
<evidence type="ECO:0000255" key="6">
    <source>
        <dbReference type="PROSITE-ProRule" id="PRU01066"/>
    </source>
</evidence>
<evidence type="ECO:0000255" key="7">
    <source>
        <dbReference type="PROSITE-ProRule" id="PRU01136"/>
    </source>
</evidence>
<evidence type="ECO:0000255" key="8">
    <source>
        <dbReference type="PROSITE-ProRule" id="PRU01137"/>
    </source>
</evidence>
<evidence type="ECO:0000255" key="9">
    <source>
        <dbReference type="PROSITE-ProRule" id="PRU01138"/>
    </source>
</evidence>
<evidence type="ECO:0000269" key="10">
    <source>
    </source>
</evidence>
<evidence type="ECO:0000269" key="11">
    <source>
    </source>
</evidence>
<evidence type="ECO:0000269" key="12">
    <source>
    </source>
</evidence>
<evidence type="ECO:0000305" key="13"/>
<keyword id="KW-0067">ATP-binding</keyword>
<keyword id="KW-0092">Biotin</keyword>
<keyword id="KW-0963">Cytoplasm</keyword>
<keyword id="KW-0275">Fatty acid biosynthesis</keyword>
<keyword id="KW-0276">Fatty acid metabolism</keyword>
<keyword id="KW-0436">Ligase</keyword>
<keyword id="KW-0444">Lipid biosynthesis</keyword>
<keyword id="KW-0443">Lipid metabolism</keyword>
<keyword id="KW-0464">Manganese</keyword>
<keyword id="KW-0479">Metal-binding</keyword>
<keyword id="KW-0511">Multifunctional enzyme</keyword>
<keyword id="KW-0547">Nucleotide-binding</keyword>
<keyword id="KW-0597">Phosphoprotein</keyword>
<keyword id="KW-1185">Reference proteome</keyword>
<accession>P78820</accession>
<accession>O94557</accession>
<accession>Q09447</accession>
<accession>Q09576</accession>
<accession>Q09616</accession>
<accession>Q09667</accession>
<dbReference type="EC" id="6.4.1.2"/>
<dbReference type="EC" id="6.3.4.14"/>
<dbReference type="EMBL" id="D78169">
    <property type="protein sequence ID" value="BAA11238.1"/>
    <property type="molecule type" value="Genomic_DNA"/>
</dbReference>
<dbReference type="EMBL" id="CU329670">
    <property type="protein sequence ID" value="CAB16395.1"/>
    <property type="molecule type" value="Genomic_DNA"/>
</dbReference>
<dbReference type="EMBL" id="D83413">
    <property type="protein sequence ID" value="BAA11914.1"/>
    <property type="molecule type" value="Genomic_DNA"/>
</dbReference>
<dbReference type="EMBL" id="D83414">
    <property type="protein sequence ID" value="BAA11915.1"/>
    <property type="molecule type" value="Genomic_DNA"/>
</dbReference>
<dbReference type="EMBL" id="D83416">
    <property type="protein sequence ID" value="BAA11917.1"/>
    <property type="status" value="ALT_FRAME"/>
    <property type="molecule type" value="Genomic_DNA"/>
</dbReference>
<dbReference type="EMBL" id="D83415">
    <property type="protein sequence ID" value="BAA11916.1"/>
    <property type="status" value="ALT_FRAME"/>
    <property type="molecule type" value="Genomic_DNA"/>
</dbReference>
<dbReference type="PIR" id="T38906">
    <property type="entry name" value="T38906"/>
</dbReference>
<dbReference type="PIR" id="T42531">
    <property type="entry name" value="T42531"/>
</dbReference>
<dbReference type="RefSeq" id="NP_593271.1">
    <property type="nucleotide sequence ID" value="NM_001018668.2"/>
</dbReference>
<dbReference type="SMR" id="P78820"/>
<dbReference type="BioGRID" id="279766">
    <property type="interactions" value="9"/>
</dbReference>
<dbReference type="FunCoup" id="P78820">
    <property type="interactions" value="309"/>
</dbReference>
<dbReference type="IntAct" id="P78820">
    <property type="interactions" value="1"/>
</dbReference>
<dbReference type="STRING" id="284812.P78820"/>
<dbReference type="iPTMnet" id="P78820"/>
<dbReference type="PaxDb" id="4896-SPAC56E4.04c.1"/>
<dbReference type="EnsemblFungi" id="SPAC56E4.04c.1">
    <property type="protein sequence ID" value="SPAC56E4.04c.1:pep"/>
    <property type="gene ID" value="SPAC56E4.04c"/>
</dbReference>
<dbReference type="GeneID" id="2543344"/>
<dbReference type="KEGG" id="spo:2543344"/>
<dbReference type="PomBase" id="SPAC56E4.04c">
    <property type="gene designation" value="cut6"/>
</dbReference>
<dbReference type="VEuPathDB" id="FungiDB:SPAC56E4.04c"/>
<dbReference type="eggNOG" id="KOG0368">
    <property type="taxonomic scope" value="Eukaryota"/>
</dbReference>
<dbReference type="HOGENOM" id="CLU_000395_5_2_1"/>
<dbReference type="InParanoid" id="P78820"/>
<dbReference type="OMA" id="PTPKGHC"/>
<dbReference type="PhylomeDB" id="P78820"/>
<dbReference type="Reactome" id="R-SPO-196780">
    <property type="pathway name" value="Biotin transport and metabolism"/>
</dbReference>
<dbReference type="Reactome" id="R-SPO-200425">
    <property type="pathway name" value="Carnitine shuttle"/>
</dbReference>
<dbReference type="Reactome" id="R-SPO-75105">
    <property type="pathway name" value="Fatty acyl-CoA biosynthesis"/>
</dbReference>
<dbReference type="UniPathway" id="UPA00655">
    <property type="reaction ID" value="UER00711"/>
</dbReference>
<dbReference type="PRO" id="PR:P78820"/>
<dbReference type="Proteomes" id="UP000002485">
    <property type="component" value="Chromosome I"/>
</dbReference>
<dbReference type="GO" id="GO:0005737">
    <property type="term" value="C:cytoplasm"/>
    <property type="evidence" value="ECO:0007005"/>
    <property type="project" value="PomBase"/>
</dbReference>
<dbReference type="GO" id="GO:0005829">
    <property type="term" value="C:cytosol"/>
    <property type="evidence" value="ECO:0007005"/>
    <property type="project" value="PomBase"/>
</dbReference>
<dbReference type="GO" id="GO:0000329">
    <property type="term" value="C:fungal-type vacuole membrane"/>
    <property type="evidence" value="ECO:0007005"/>
    <property type="project" value="PomBase"/>
</dbReference>
<dbReference type="GO" id="GO:0005739">
    <property type="term" value="C:mitochondrion"/>
    <property type="evidence" value="ECO:0000318"/>
    <property type="project" value="GO_Central"/>
</dbReference>
<dbReference type="GO" id="GO:0003989">
    <property type="term" value="F:acetyl-CoA carboxylase activity"/>
    <property type="evidence" value="ECO:0000318"/>
    <property type="project" value="GO_Central"/>
</dbReference>
<dbReference type="GO" id="GO:0005524">
    <property type="term" value="F:ATP binding"/>
    <property type="evidence" value="ECO:0000250"/>
    <property type="project" value="PomBase"/>
</dbReference>
<dbReference type="GO" id="GO:0004075">
    <property type="term" value="F:biotin carboxylase activity"/>
    <property type="evidence" value="ECO:0000266"/>
    <property type="project" value="PomBase"/>
</dbReference>
<dbReference type="GO" id="GO:0046872">
    <property type="term" value="F:metal ion binding"/>
    <property type="evidence" value="ECO:0007669"/>
    <property type="project" value="UniProtKB-KW"/>
</dbReference>
<dbReference type="GO" id="GO:0006633">
    <property type="term" value="P:fatty acid biosynthetic process"/>
    <property type="evidence" value="ECO:0000318"/>
    <property type="project" value="GO_Central"/>
</dbReference>
<dbReference type="GO" id="GO:2001295">
    <property type="term" value="P:malonyl-CoA biosynthetic process"/>
    <property type="evidence" value="ECO:0007669"/>
    <property type="project" value="UniProtKB-UniPathway"/>
</dbReference>
<dbReference type="GO" id="GO:0101026">
    <property type="term" value="P:mitotic nuclear membrane biogenesis"/>
    <property type="evidence" value="ECO:0000315"/>
    <property type="project" value="PomBase"/>
</dbReference>
<dbReference type="CDD" id="cd06850">
    <property type="entry name" value="biotinyl_domain"/>
    <property type="match status" value="1"/>
</dbReference>
<dbReference type="FunFam" id="2.40.460.10:FF:000001">
    <property type="entry name" value="Acetyl-CoA carboxylase 1"/>
    <property type="match status" value="1"/>
</dbReference>
<dbReference type="FunFam" id="2.40.50.100:FF:000005">
    <property type="entry name" value="Acetyl-CoA carboxylase 1"/>
    <property type="match status" value="1"/>
</dbReference>
<dbReference type="FunFam" id="3.30.1490.20:FF:000003">
    <property type="entry name" value="acetyl-CoA carboxylase isoform X1"/>
    <property type="match status" value="1"/>
</dbReference>
<dbReference type="FunFam" id="3.40.50.20:FF:000005">
    <property type="entry name" value="acetyl-CoA carboxylase isoform X2"/>
    <property type="match status" value="1"/>
</dbReference>
<dbReference type="FunFam" id="3.90.226.10:FF:000010">
    <property type="entry name" value="acetyl-CoA carboxylase isoform X2"/>
    <property type="match status" value="1"/>
</dbReference>
<dbReference type="Gene3D" id="2.40.50.100">
    <property type="match status" value="1"/>
</dbReference>
<dbReference type="Gene3D" id="3.40.50.20">
    <property type="match status" value="1"/>
</dbReference>
<dbReference type="Gene3D" id="3.90.226.10">
    <property type="entry name" value="2-enoyl-CoA Hydratase, Chain A, domain 1"/>
    <property type="match status" value="2"/>
</dbReference>
<dbReference type="Gene3D" id="3.30.1490.20">
    <property type="entry name" value="ATP-grasp fold, A domain"/>
    <property type="match status" value="1"/>
</dbReference>
<dbReference type="Gene3D" id="3.30.470.20">
    <property type="entry name" value="ATP-grasp fold, B domain"/>
    <property type="match status" value="1"/>
</dbReference>
<dbReference type="Gene3D" id="2.40.460.10">
    <property type="entry name" value="Biotin dependent carboxylase carboxyltransferase"/>
    <property type="match status" value="1"/>
</dbReference>
<dbReference type="Gene3D" id="3.90.1770.10">
    <property type="entry name" value="PreATP-grasp domain"/>
    <property type="match status" value="1"/>
</dbReference>
<dbReference type="InterPro" id="IPR049076">
    <property type="entry name" value="ACCA"/>
</dbReference>
<dbReference type="InterPro" id="IPR049074">
    <property type="entry name" value="ACCA_BT"/>
</dbReference>
<dbReference type="InterPro" id="IPR034733">
    <property type="entry name" value="AcCoA_carboxyl_beta"/>
</dbReference>
<dbReference type="InterPro" id="IPR013537">
    <property type="entry name" value="AcCoA_COase_cen"/>
</dbReference>
<dbReference type="InterPro" id="IPR011761">
    <property type="entry name" value="ATP-grasp"/>
</dbReference>
<dbReference type="InterPro" id="IPR013815">
    <property type="entry name" value="ATP_grasp_subdomain_1"/>
</dbReference>
<dbReference type="InterPro" id="IPR005481">
    <property type="entry name" value="BC-like_N"/>
</dbReference>
<dbReference type="InterPro" id="IPR001882">
    <property type="entry name" value="Biotin_BS"/>
</dbReference>
<dbReference type="InterPro" id="IPR011764">
    <property type="entry name" value="Biotin_carboxylation_dom"/>
</dbReference>
<dbReference type="InterPro" id="IPR005482">
    <property type="entry name" value="Biotin_COase_C"/>
</dbReference>
<dbReference type="InterPro" id="IPR000089">
    <property type="entry name" value="Biotin_lipoyl"/>
</dbReference>
<dbReference type="InterPro" id="IPR005479">
    <property type="entry name" value="CbamoylP_synth_lsu-like_ATP-bd"/>
</dbReference>
<dbReference type="InterPro" id="IPR029045">
    <property type="entry name" value="ClpP/crotonase-like_dom_sf"/>
</dbReference>
<dbReference type="InterPro" id="IPR011763">
    <property type="entry name" value="COA_CT_C"/>
</dbReference>
<dbReference type="InterPro" id="IPR011762">
    <property type="entry name" value="COA_CT_N"/>
</dbReference>
<dbReference type="InterPro" id="IPR016185">
    <property type="entry name" value="PreATP-grasp_dom_sf"/>
</dbReference>
<dbReference type="InterPro" id="IPR011054">
    <property type="entry name" value="Rudment_hybrid_motif"/>
</dbReference>
<dbReference type="InterPro" id="IPR011053">
    <property type="entry name" value="Single_hybrid_motif"/>
</dbReference>
<dbReference type="PANTHER" id="PTHR45728:SF3">
    <property type="entry name" value="ACETYL-COA CARBOXYLASE"/>
    <property type="match status" value="1"/>
</dbReference>
<dbReference type="PANTHER" id="PTHR45728">
    <property type="entry name" value="ACETYL-COA CARBOXYLASE, ISOFORM A"/>
    <property type="match status" value="1"/>
</dbReference>
<dbReference type="Pfam" id="PF08326">
    <property type="entry name" value="ACC_central"/>
    <property type="match status" value="1"/>
</dbReference>
<dbReference type="Pfam" id="PF21385">
    <property type="entry name" value="ACCA_BT"/>
    <property type="match status" value="1"/>
</dbReference>
<dbReference type="Pfam" id="PF02785">
    <property type="entry name" value="Biotin_carb_C"/>
    <property type="match status" value="1"/>
</dbReference>
<dbReference type="Pfam" id="PF00289">
    <property type="entry name" value="Biotin_carb_N"/>
    <property type="match status" value="1"/>
</dbReference>
<dbReference type="Pfam" id="PF00364">
    <property type="entry name" value="Biotin_lipoyl"/>
    <property type="match status" value="1"/>
</dbReference>
<dbReference type="Pfam" id="PF01039">
    <property type="entry name" value="Carboxyl_trans"/>
    <property type="match status" value="1"/>
</dbReference>
<dbReference type="Pfam" id="PF02786">
    <property type="entry name" value="CPSase_L_D2"/>
    <property type="match status" value="1"/>
</dbReference>
<dbReference type="SMART" id="SM00878">
    <property type="entry name" value="Biotin_carb_C"/>
    <property type="match status" value="1"/>
</dbReference>
<dbReference type="SUPFAM" id="SSF52096">
    <property type="entry name" value="ClpP/crotonase"/>
    <property type="match status" value="2"/>
</dbReference>
<dbReference type="SUPFAM" id="SSF56059">
    <property type="entry name" value="Glutathione synthetase ATP-binding domain-like"/>
    <property type="match status" value="1"/>
</dbReference>
<dbReference type="SUPFAM" id="SSF52440">
    <property type="entry name" value="PreATP-grasp domain"/>
    <property type="match status" value="1"/>
</dbReference>
<dbReference type="SUPFAM" id="SSF51246">
    <property type="entry name" value="Rudiment single hybrid motif"/>
    <property type="match status" value="1"/>
</dbReference>
<dbReference type="SUPFAM" id="SSF51230">
    <property type="entry name" value="Single hybrid motif"/>
    <property type="match status" value="1"/>
</dbReference>
<dbReference type="PROSITE" id="PS50975">
    <property type="entry name" value="ATP_GRASP"/>
    <property type="match status" value="1"/>
</dbReference>
<dbReference type="PROSITE" id="PS50979">
    <property type="entry name" value="BC"/>
    <property type="match status" value="1"/>
</dbReference>
<dbReference type="PROSITE" id="PS00188">
    <property type="entry name" value="BIOTIN"/>
    <property type="match status" value="1"/>
</dbReference>
<dbReference type="PROSITE" id="PS50968">
    <property type="entry name" value="BIOTINYL_LIPOYL"/>
    <property type="match status" value="1"/>
</dbReference>
<dbReference type="PROSITE" id="PS50989">
    <property type="entry name" value="COA_CT_CTER"/>
    <property type="match status" value="1"/>
</dbReference>
<dbReference type="PROSITE" id="PS50980">
    <property type="entry name" value="COA_CT_NTER"/>
    <property type="match status" value="1"/>
</dbReference>
<dbReference type="PROSITE" id="PS00866">
    <property type="entry name" value="CPSASE_1"/>
    <property type="match status" value="1"/>
</dbReference>
<dbReference type="PROSITE" id="PS00867">
    <property type="entry name" value="CPSASE_2"/>
    <property type="match status" value="1"/>
</dbReference>
<reference key="1">
    <citation type="submission" date="1996-12" db="EMBL/GenBank/DDBJ databases">
        <title>Biotin-dependent enzymes in Schizosaccharomyces pombe: cloning and nucleotide sequences of acetyl-CoA carboxylase and pyruvate carboxylase.</title>
        <authorList>
            <person name="Saito A."/>
            <person name="Kazuta Y."/>
            <person name="Toh H."/>
            <person name="Kondo H."/>
            <person name="Tanabe T."/>
        </authorList>
    </citation>
    <scope>NUCLEOTIDE SEQUENCE [GENOMIC DNA]</scope>
    <source>
        <strain>972 / HM123</strain>
    </source>
</reference>
<reference key="2">
    <citation type="journal article" date="2002" name="Nature">
        <title>The genome sequence of Schizosaccharomyces pombe.</title>
        <authorList>
            <person name="Wood V."/>
            <person name="Gwilliam R."/>
            <person name="Rajandream M.A."/>
            <person name="Lyne M.H."/>
            <person name="Lyne R."/>
            <person name="Stewart A."/>
            <person name="Sgouros J.G."/>
            <person name="Peat N."/>
            <person name="Hayles J."/>
            <person name="Baker S.G."/>
            <person name="Basham D."/>
            <person name="Bowman S."/>
            <person name="Brooks K."/>
            <person name="Brown D."/>
            <person name="Brown S."/>
            <person name="Chillingworth T."/>
            <person name="Churcher C.M."/>
            <person name="Collins M."/>
            <person name="Connor R."/>
            <person name="Cronin A."/>
            <person name="Davis P."/>
            <person name="Feltwell T."/>
            <person name="Fraser A."/>
            <person name="Gentles S."/>
            <person name="Goble A."/>
            <person name="Hamlin N."/>
            <person name="Harris D.E."/>
            <person name="Hidalgo J."/>
            <person name="Hodgson G."/>
            <person name="Holroyd S."/>
            <person name="Hornsby T."/>
            <person name="Howarth S."/>
            <person name="Huckle E.J."/>
            <person name="Hunt S."/>
            <person name="Jagels K."/>
            <person name="James K.D."/>
            <person name="Jones L."/>
            <person name="Jones M."/>
            <person name="Leather S."/>
            <person name="McDonald S."/>
            <person name="McLean J."/>
            <person name="Mooney P."/>
            <person name="Moule S."/>
            <person name="Mungall K.L."/>
            <person name="Murphy L.D."/>
            <person name="Niblett D."/>
            <person name="Odell C."/>
            <person name="Oliver K."/>
            <person name="O'Neil S."/>
            <person name="Pearson D."/>
            <person name="Quail M.A."/>
            <person name="Rabbinowitsch E."/>
            <person name="Rutherford K.M."/>
            <person name="Rutter S."/>
            <person name="Saunders D."/>
            <person name="Seeger K."/>
            <person name="Sharp S."/>
            <person name="Skelton J."/>
            <person name="Simmonds M.N."/>
            <person name="Squares R."/>
            <person name="Squares S."/>
            <person name="Stevens K."/>
            <person name="Taylor K."/>
            <person name="Taylor R.G."/>
            <person name="Tivey A."/>
            <person name="Walsh S.V."/>
            <person name="Warren T."/>
            <person name="Whitehead S."/>
            <person name="Woodward J.R."/>
            <person name="Volckaert G."/>
            <person name="Aert R."/>
            <person name="Robben J."/>
            <person name="Grymonprez B."/>
            <person name="Weltjens I."/>
            <person name="Vanstreels E."/>
            <person name="Rieger M."/>
            <person name="Schaefer M."/>
            <person name="Mueller-Auer S."/>
            <person name="Gabel C."/>
            <person name="Fuchs M."/>
            <person name="Duesterhoeft A."/>
            <person name="Fritzc C."/>
            <person name="Holzer E."/>
            <person name="Moestl D."/>
            <person name="Hilbert H."/>
            <person name="Borzym K."/>
            <person name="Langer I."/>
            <person name="Beck A."/>
            <person name="Lehrach H."/>
            <person name="Reinhardt R."/>
            <person name="Pohl T.M."/>
            <person name="Eger P."/>
            <person name="Zimmermann W."/>
            <person name="Wedler H."/>
            <person name="Wambutt R."/>
            <person name="Purnelle B."/>
            <person name="Goffeau A."/>
            <person name="Cadieu E."/>
            <person name="Dreano S."/>
            <person name="Gloux S."/>
            <person name="Lelaure V."/>
            <person name="Mottier S."/>
            <person name="Galibert F."/>
            <person name="Aves S.J."/>
            <person name="Xiang Z."/>
            <person name="Hunt C."/>
            <person name="Moore K."/>
            <person name="Hurst S.M."/>
            <person name="Lucas M."/>
            <person name="Rochet M."/>
            <person name="Gaillardin C."/>
            <person name="Tallada V.A."/>
            <person name="Garzon A."/>
            <person name="Thode G."/>
            <person name="Daga R.R."/>
            <person name="Cruzado L."/>
            <person name="Jimenez J."/>
            <person name="Sanchez M."/>
            <person name="del Rey F."/>
            <person name="Benito J."/>
            <person name="Dominguez A."/>
            <person name="Revuelta J.L."/>
            <person name="Moreno S."/>
            <person name="Armstrong J."/>
            <person name="Forsburg S.L."/>
            <person name="Cerutti L."/>
            <person name="Lowe T."/>
            <person name="McCombie W.R."/>
            <person name="Paulsen I."/>
            <person name="Potashkin J."/>
            <person name="Shpakovski G.V."/>
            <person name="Ussery D."/>
            <person name="Barrell B.G."/>
            <person name="Nurse P."/>
        </authorList>
    </citation>
    <scope>NUCLEOTIDE SEQUENCE [LARGE SCALE GENOMIC DNA]</scope>
    <source>
        <strain>972 / ATCC 24843</strain>
    </source>
</reference>
<reference key="3">
    <citation type="journal article" date="1996" name="J. Cell Biol.">
        <title>Aberrant mitosis in fission yeast mutants defective in fatty acid synthetase and acetyl CoA carboxylase.</title>
        <authorList>
            <person name="Saitoh S."/>
            <person name="Takahashi K."/>
            <person name="Nabeshima K."/>
            <person name="Yamashita Y."/>
            <person name="Nakaseko Y."/>
            <person name="Hirata A."/>
            <person name="Yanagida M."/>
        </authorList>
    </citation>
    <scope>NUCLEOTIDE SEQUENCE [GENOMIC DNA] OF 14-161; 636-871; 998-1098 AND 1380-1547</scope>
</reference>
<reference key="4">
    <citation type="journal article" date="2004" name="Mol. Genet. Genomics">
        <title>Two-hybrid search for proteins that interact with Sad1 and Kms1, two membrane-bound components of the spindle pole body in fission yeast.</title>
        <authorList>
            <person name="Miki F."/>
            <person name="Kurabayashi A."/>
            <person name="Tange Y."/>
            <person name="Okazaki K."/>
            <person name="Shimanuki M."/>
            <person name="Niwa O."/>
        </authorList>
    </citation>
    <scope>INTERACTION WITH SAD1</scope>
</reference>
<reference key="5">
    <citation type="journal article" date="2006" name="Nat. Biotechnol.">
        <title>ORFeome cloning and global analysis of protein localization in the fission yeast Schizosaccharomyces pombe.</title>
        <authorList>
            <person name="Matsuyama A."/>
            <person name="Arai R."/>
            <person name="Yashiroda Y."/>
            <person name="Shirai A."/>
            <person name="Kamata A."/>
            <person name="Sekido S."/>
            <person name="Kobayashi Y."/>
            <person name="Hashimoto A."/>
            <person name="Hamamoto M."/>
            <person name="Hiraoka Y."/>
            <person name="Horinouchi S."/>
            <person name="Yoshida M."/>
        </authorList>
    </citation>
    <scope>SUBCELLULAR LOCATION [LARGE SCALE ANALYSIS]</scope>
</reference>
<reference key="6">
    <citation type="journal article" date="2008" name="J. Proteome Res.">
        <title>Phosphoproteome analysis of fission yeast.</title>
        <authorList>
            <person name="Wilson-Grady J.T."/>
            <person name="Villen J."/>
            <person name="Gygi S.P."/>
        </authorList>
    </citation>
    <scope>PHOSPHORYLATION [LARGE SCALE ANALYSIS] AT SER-1179 AND SER-1181</scope>
    <scope>IDENTIFICATION BY MASS SPECTROMETRY</scope>
</reference>
<feature type="chain" id="PRO_0000146769" description="Acetyl-CoA carboxylase">
    <location>
        <begin position="1"/>
        <end position="2280"/>
    </location>
</feature>
<feature type="domain" description="Biotin carboxylation">
    <location>
        <begin position="68"/>
        <end position="577"/>
    </location>
</feature>
<feature type="domain" description="ATP-grasp" evidence="5">
    <location>
        <begin position="226"/>
        <end position="418"/>
    </location>
</feature>
<feature type="domain" description="Biotinyl-binding" evidence="6">
    <location>
        <begin position="704"/>
        <end position="778"/>
    </location>
</feature>
<feature type="domain" description="CoA carboxyltransferase N-terminal" evidence="7">
    <location>
        <begin position="1524"/>
        <end position="1863"/>
    </location>
</feature>
<feature type="domain" description="CoA carboxyltransferase C-terminal" evidence="8">
    <location>
        <begin position="1867"/>
        <end position="2181"/>
    </location>
</feature>
<feature type="region of interest" description="Carboxyltransferase" evidence="9">
    <location>
        <begin position="1524"/>
        <end position="2181"/>
    </location>
</feature>
<feature type="active site" evidence="1">
    <location>
        <position position="393"/>
    </location>
</feature>
<feature type="binding site" evidence="5">
    <location>
        <begin position="266"/>
        <end position="271"/>
    </location>
    <ligand>
        <name>ATP</name>
        <dbReference type="ChEBI" id="CHEBI:30616"/>
    </ligand>
</feature>
<feature type="binding site" evidence="1">
    <location>
        <position position="375"/>
    </location>
    <ligand>
        <name>Mn(2+)</name>
        <dbReference type="ChEBI" id="CHEBI:29035"/>
        <label>1</label>
    </ligand>
</feature>
<feature type="binding site" evidence="1">
    <location>
        <position position="389"/>
    </location>
    <ligand>
        <name>Mn(2+)</name>
        <dbReference type="ChEBI" id="CHEBI:29035"/>
        <label>1</label>
    </ligand>
</feature>
<feature type="binding site" evidence="1">
    <location>
        <position position="389"/>
    </location>
    <ligand>
        <name>Mn(2+)</name>
        <dbReference type="ChEBI" id="CHEBI:29035"/>
        <label>2</label>
    </ligand>
</feature>
<feature type="binding site" evidence="1">
    <location>
        <position position="391"/>
    </location>
    <ligand>
        <name>Mn(2+)</name>
        <dbReference type="ChEBI" id="CHEBI:29035"/>
        <label>2</label>
    </ligand>
</feature>
<feature type="binding site" evidence="1">
    <location>
        <position position="1772"/>
    </location>
    <ligand>
        <name>CoA</name>
        <dbReference type="ChEBI" id="CHEBI:57287"/>
    </ligand>
</feature>
<feature type="binding site" evidence="1">
    <location>
        <position position="2074"/>
    </location>
    <ligand>
        <name>CoA</name>
        <dbReference type="ChEBI" id="CHEBI:57287"/>
    </ligand>
</feature>
<feature type="binding site" evidence="1">
    <location>
        <position position="2076"/>
    </location>
    <ligand>
        <name>CoA</name>
        <dbReference type="ChEBI" id="CHEBI:57287"/>
    </ligand>
</feature>
<feature type="modified residue" description="N6-biotinyllysine" evidence="1 6">
    <location>
        <position position="745"/>
    </location>
</feature>
<feature type="modified residue" description="Phosphoserine" evidence="12">
    <location>
        <position position="1179"/>
    </location>
</feature>
<feature type="modified residue" description="Phosphoserine" evidence="12">
    <location>
        <position position="1181"/>
    </location>
</feature>
<feature type="sequence conflict" description="In Ref. 3; BAA11914." evidence="13" ref="3">
    <original>LYAIKATISLPRLFYRRLRTMAPRVASHF</original>
    <variation>RFIFIDVLLISQLSISSFSFFILYFINHI</variation>
    <location>
        <begin position="14"/>
        <end position="42"/>
    </location>
</feature>
<feature type="sequence conflict" description="In Ref. 1; BAA11238." evidence="13" ref="1">
    <original>P</original>
    <variation>S</variation>
    <location>
        <position position="258"/>
    </location>
</feature>
<feature type="sequence conflict" description="In Ref. 1; BAA11238." evidence="13" ref="1">
    <original>IE</original>
    <variation>L</variation>
    <location>
        <begin position="339"/>
        <end position="340"/>
    </location>
</feature>
<feature type="sequence conflict" description="In Ref. 1; BAA11238." evidence="13" ref="1">
    <original>A</original>
    <variation>S</variation>
    <location>
        <position position="512"/>
    </location>
</feature>
<feature type="sequence conflict" description="In Ref. 1; BAA11238." evidence="13" ref="1">
    <original>A</original>
    <variation>T</variation>
    <location>
        <position position="523"/>
    </location>
</feature>
<feature type="sequence conflict" description="In Ref. 3; BAA11915." evidence="13" ref="3">
    <original>DNTR</original>
    <variation>YRIP</variation>
    <location>
        <begin position="636"/>
        <end position="639"/>
    </location>
</feature>
<feature type="sequence conflict" description="In Ref. 3; BAA11917." evidence="13" ref="3">
    <original>K</original>
    <variation>N</variation>
    <location>
        <position position="1017"/>
    </location>
</feature>
<feature type="sequence conflict" description="In Ref. 3; BAA11917." evidence="13" ref="3">
    <original>R</original>
    <variation>H</variation>
    <location>
        <position position="1073"/>
    </location>
</feature>
<feature type="sequence conflict" description="In Ref. 3; BAA11917." evidence="13" ref="3">
    <original>F</original>
    <variation>L</variation>
    <location>
        <position position="1098"/>
    </location>
</feature>
<feature type="sequence conflict" description="In Ref. 1; BAA11238." evidence="13" ref="1">
    <original>V</original>
    <variation>Y</variation>
    <location>
        <position position="1105"/>
    </location>
</feature>
<feature type="sequence conflict" description="In Ref. 1; BAA11238." evidence="13" ref="1">
    <original>R</original>
    <variation>S</variation>
    <location>
        <position position="1362"/>
    </location>
</feature>
<feature type="sequence conflict" description="In Ref. 3; BAA11916." evidence="13" ref="3">
    <original>F</original>
    <variation>Y</variation>
    <location>
        <position position="1427"/>
    </location>
</feature>
<feature type="sequence conflict" description="In Ref. 1; BAA11238." evidence="13" ref="1">
    <original>G</original>
    <variation>E</variation>
    <location>
        <position position="1444"/>
    </location>
</feature>
<feature type="sequence conflict" description="In Ref. 3; BAA11916." evidence="13" ref="3">
    <original>F</original>
    <variation>C</variation>
    <location>
        <position position="1445"/>
    </location>
</feature>
<feature type="sequence conflict" description="In Ref. 3; BAA11916." evidence="13" ref="3">
    <original>F</original>
    <variation>L</variation>
    <location>
        <position position="1449"/>
    </location>
</feature>
<feature type="sequence conflict" description="In Ref. 1; BAA11238." evidence="13" ref="1">
    <original>R</original>
    <variation>S</variation>
    <location>
        <position position="1451"/>
    </location>
</feature>
<feature type="sequence conflict" description="In Ref. 3; BAA11916." evidence="13" ref="3">
    <original>I</original>
    <variation>F</variation>
    <location>
        <position position="1465"/>
    </location>
</feature>
<feature type="sequence conflict" description="In Ref. 3; BAA11916." evidence="13" ref="3">
    <original>V</original>
    <variation>L</variation>
    <location>
        <position position="1480"/>
    </location>
</feature>
<feature type="sequence conflict" description="In Ref. 3; BAA11916." evidence="13" ref="3">
    <original>V</original>
    <variation>L</variation>
    <location>
        <position position="1485"/>
    </location>
</feature>
<feature type="sequence conflict" description="In Ref. 1; BAA11238." evidence="13" ref="1">
    <original>A</original>
    <variation>S</variation>
    <location>
        <position position="1496"/>
    </location>
</feature>
<gene>
    <name type="primary">cut6</name>
    <name type="ORF">SPAC56E4.04c</name>
</gene>
<comment type="function">
    <text>Carries out three functions: biotin carboxyl carrier protein, biotin carboxylase and carboxyltransferase.</text>
</comment>
<comment type="catalytic activity">
    <reaction evidence="3">
        <text>hydrogencarbonate + acetyl-CoA + ATP = malonyl-CoA + ADP + phosphate + H(+)</text>
        <dbReference type="Rhea" id="RHEA:11308"/>
        <dbReference type="ChEBI" id="CHEBI:15378"/>
        <dbReference type="ChEBI" id="CHEBI:17544"/>
        <dbReference type="ChEBI" id="CHEBI:30616"/>
        <dbReference type="ChEBI" id="CHEBI:43474"/>
        <dbReference type="ChEBI" id="CHEBI:57288"/>
        <dbReference type="ChEBI" id="CHEBI:57384"/>
        <dbReference type="ChEBI" id="CHEBI:456216"/>
        <dbReference type="EC" id="6.4.1.2"/>
    </reaction>
</comment>
<comment type="catalytic activity">
    <reaction evidence="4">
        <text>N(6)-biotinyl-L-lysyl-[protein] + hydrogencarbonate + ATP = N(6)-carboxybiotinyl-L-lysyl-[protein] + ADP + phosphate + H(+)</text>
        <dbReference type="Rhea" id="RHEA:13501"/>
        <dbReference type="Rhea" id="RHEA-COMP:10505"/>
        <dbReference type="Rhea" id="RHEA-COMP:10506"/>
        <dbReference type="ChEBI" id="CHEBI:15378"/>
        <dbReference type="ChEBI" id="CHEBI:17544"/>
        <dbReference type="ChEBI" id="CHEBI:30616"/>
        <dbReference type="ChEBI" id="CHEBI:43474"/>
        <dbReference type="ChEBI" id="CHEBI:83144"/>
        <dbReference type="ChEBI" id="CHEBI:83145"/>
        <dbReference type="ChEBI" id="CHEBI:456216"/>
        <dbReference type="EC" id="6.3.4.14"/>
    </reaction>
</comment>
<comment type="cofactor">
    <cofactor evidence="2">
        <name>biotin</name>
        <dbReference type="ChEBI" id="CHEBI:57586"/>
    </cofactor>
</comment>
<comment type="cofactor">
    <cofactor evidence="1">
        <name>Mn(2+)</name>
        <dbReference type="ChEBI" id="CHEBI:29035"/>
    </cofactor>
    <text evidence="1">Binds 2 manganese ions per subunit.</text>
</comment>
<comment type="activity regulation">
    <text evidence="1">By phosphorylation.</text>
</comment>
<comment type="pathway">
    <text>Lipid metabolism; malonyl-CoA biosynthesis; malonyl-CoA from acetyl-CoA: step 1/1.</text>
</comment>
<comment type="subunit">
    <text evidence="10">Interacts with sad1.</text>
</comment>
<comment type="subcellular location">
    <subcellularLocation>
        <location evidence="11">Cytoplasm</location>
    </subcellularLocation>
</comment>
<comment type="sequence caution" evidence="13">
    <conflict type="frameshift">
        <sequence resource="EMBL-CDS" id="BAA11916"/>
    </conflict>
</comment>
<comment type="sequence caution" evidence="13">
    <conflict type="frameshift">
        <sequence resource="EMBL-CDS" id="BAA11917"/>
    </conflict>
</comment>
<organism>
    <name type="scientific">Schizosaccharomyces pombe (strain 972 / ATCC 24843)</name>
    <name type="common">Fission yeast</name>
    <dbReference type="NCBI Taxonomy" id="284812"/>
    <lineage>
        <taxon>Eukaryota</taxon>
        <taxon>Fungi</taxon>
        <taxon>Dikarya</taxon>
        <taxon>Ascomycota</taxon>
        <taxon>Taphrinomycotina</taxon>
        <taxon>Schizosaccharomycetes</taxon>
        <taxon>Schizosaccharomycetales</taxon>
        <taxon>Schizosaccharomycetaceae</taxon>
        <taxon>Schizosaccharomyces</taxon>
    </lineage>
</organism>
<protein>
    <recommendedName>
        <fullName>Acetyl-CoA carboxylase</fullName>
        <shortName>ACC</shortName>
        <ecNumber>6.4.1.2</ecNumber>
    </recommendedName>
    <alternativeName>
        <fullName>Cell untimely torn protein 6</fullName>
    </alternativeName>
    <domain>
        <recommendedName>
            <fullName>Biotin carboxylase</fullName>
            <ecNumber>6.3.4.14</ecNumber>
        </recommendedName>
    </domain>
</protein>
<proteinExistence type="evidence at protein level"/>
<name>ACAC_SCHPO</name>